<name>NDH_STAAS</name>
<keyword id="KW-1003">Cell membrane</keyword>
<keyword id="KW-0274">FAD</keyword>
<keyword id="KW-0285">Flavoprotein</keyword>
<keyword id="KW-0472">Membrane</keyword>
<keyword id="KW-0520">NAD</keyword>
<keyword id="KW-0560">Oxidoreductase</keyword>
<gene>
    <name type="ordered locus">SAS0811</name>
</gene>
<accession>Q6GAY5</accession>
<protein>
    <recommendedName>
        <fullName evidence="1">Type II NADH:quinone oxidoreductase</fullName>
        <ecNumber evidence="1">1.6.5.9</ecNumber>
    </recommendedName>
    <alternativeName>
        <fullName evidence="1">NDH-2</fullName>
    </alternativeName>
</protein>
<dbReference type="EC" id="1.6.5.9" evidence="1"/>
<dbReference type="EMBL" id="BX571857">
    <property type="protein sequence ID" value="CAG42586.1"/>
    <property type="molecule type" value="Genomic_DNA"/>
</dbReference>
<dbReference type="RefSeq" id="WP_000046075.1">
    <property type="nucleotide sequence ID" value="NC_002953.3"/>
</dbReference>
<dbReference type="SMR" id="Q6GAY5"/>
<dbReference type="KEGG" id="sas:SAS0811"/>
<dbReference type="HOGENOM" id="CLU_021377_7_2_9"/>
<dbReference type="GO" id="GO:0005886">
    <property type="term" value="C:plasma membrane"/>
    <property type="evidence" value="ECO:0007669"/>
    <property type="project" value="UniProtKB-SubCell"/>
</dbReference>
<dbReference type="GO" id="GO:0003955">
    <property type="term" value="F:NAD(P)H dehydrogenase (quinone) activity"/>
    <property type="evidence" value="ECO:0007669"/>
    <property type="project" value="TreeGrafter"/>
</dbReference>
<dbReference type="GO" id="GO:0050136">
    <property type="term" value="F:NADH:ubiquinone reductase (non-electrogenic) activity"/>
    <property type="evidence" value="ECO:0007669"/>
    <property type="project" value="UniProtKB-EC"/>
</dbReference>
<dbReference type="GO" id="GO:0019646">
    <property type="term" value="P:aerobic electron transport chain"/>
    <property type="evidence" value="ECO:0007669"/>
    <property type="project" value="TreeGrafter"/>
</dbReference>
<dbReference type="FunFam" id="3.50.50.100:FF:000004">
    <property type="entry name" value="Pyridine nucleotide-disulfide oxidoreductase"/>
    <property type="match status" value="1"/>
</dbReference>
<dbReference type="Gene3D" id="3.50.50.100">
    <property type="match status" value="1"/>
</dbReference>
<dbReference type="InterPro" id="IPR036188">
    <property type="entry name" value="FAD/NAD-bd_sf"/>
</dbReference>
<dbReference type="InterPro" id="IPR023753">
    <property type="entry name" value="FAD/NAD-binding_dom"/>
</dbReference>
<dbReference type="InterPro" id="IPR051169">
    <property type="entry name" value="NADH-Q_oxidoreductase"/>
</dbReference>
<dbReference type="PANTHER" id="PTHR42913:SF3">
    <property type="entry name" value="64 KDA MITOCHONDRIAL NADH DEHYDROGENASE (EUROFUNG)"/>
    <property type="match status" value="1"/>
</dbReference>
<dbReference type="PANTHER" id="PTHR42913">
    <property type="entry name" value="APOPTOSIS-INDUCING FACTOR 1"/>
    <property type="match status" value="1"/>
</dbReference>
<dbReference type="Pfam" id="PF07992">
    <property type="entry name" value="Pyr_redox_2"/>
    <property type="match status" value="1"/>
</dbReference>
<dbReference type="PRINTS" id="PR00368">
    <property type="entry name" value="FADPNR"/>
</dbReference>
<dbReference type="SUPFAM" id="SSF51905">
    <property type="entry name" value="FAD/NAD(P)-binding domain"/>
    <property type="match status" value="2"/>
</dbReference>
<reference key="1">
    <citation type="journal article" date="2004" name="Proc. Natl. Acad. Sci. U.S.A.">
        <title>Complete genomes of two clinical Staphylococcus aureus strains: evidence for the rapid evolution of virulence and drug resistance.</title>
        <authorList>
            <person name="Holden M.T.G."/>
            <person name="Feil E.J."/>
            <person name="Lindsay J.A."/>
            <person name="Peacock S.J."/>
            <person name="Day N.P.J."/>
            <person name="Enright M.C."/>
            <person name="Foster T.J."/>
            <person name="Moore C.E."/>
            <person name="Hurst L."/>
            <person name="Atkin R."/>
            <person name="Barron A."/>
            <person name="Bason N."/>
            <person name="Bentley S.D."/>
            <person name="Chillingworth C."/>
            <person name="Chillingworth T."/>
            <person name="Churcher C."/>
            <person name="Clark L."/>
            <person name="Corton C."/>
            <person name="Cronin A."/>
            <person name="Doggett J."/>
            <person name="Dowd L."/>
            <person name="Feltwell T."/>
            <person name="Hance Z."/>
            <person name="Harris B."/>
            <person name="Hauser H."/>
            <person name="Holroyd S."/>
            <person name="Jagels K."/>
            <person name="James K.D."/>
            <person name="Lennard N."/>
            <person name="Line A."/>
            <person name="Mayes R."/>
            <person name="Moule S."/>
            <person name="Mungall K."/>
            <person name="Ormond D."/>
            <person name="Quail M.A."/>
            <person name="Rabbinowitsch E."/>
            <person name="Rutherford K.M."/>
            <person name="Sanders M."/>
            <person name="Sharp S."/>
            <person name="Simmonds M."/>
            <person name="Stevens K."/>
            <person name="Whitehead S."/>
            <person name="Barrell B.G."/>
            <person name="Spratt B.G."/>
            <person name="Parkhill J."/>
        </authorList>
    </citation>
    <scope>NUCLEOTIDE SEQUENCE [LARGE SCALE GENOMIC DNA]</scope>
    <source>
        <strain>MSSA476</strain>
    </source>
</reference>
<comment type="function">
    <text evidence="1">Alternative, nonproton pumping NADH:quinone oxidoreductase that delivers electrons to the respiratory chain by oxidation of NADH and reduction of quinones, and contributes to the regeneration of NAD(+).</text>
</comment>
<comment type="catalytic activity">
    <reaction evidence="1">
        <text>a quinone + NADH + H(+) = a quinol + NAD(+)</text>
        <dbReference type="Rhea" id="RHEA:46160"/>
        <dbReference type="ChEBI" id="CHEBI:15378"/>
        <dbReference type="ChEBI" id="CHEBI:24646"/>
        <dbReference type="ChEBI" id="CHEBI:57540"/>
        <dbReference type="ChEBI" id="CHEBI:57945"/>
        <dbReference type="ChEBI" id="CHEBI:132124"/>
        <dbReference type="EC" id="1.6.5.9"/>
    </reaction>
</comment>
<comment type="cofactor">
    <cofactor evidence="1">
        <name>FAD</name>
        <dbReference type="ChEBI" id="CHEBI:57692"/>
    </cofactor>
    <text evidence="1">Binds 1 FAD per subunit.</text>
</comment>
<comment type="subcellular location">
    <subcellularLocation>
        <location evidence="1">Cell membrane</location>
    </subcellularLocation>
</comment>
<comment type="similarity">
    <text evidence="2">Belongs to the NADH dehydrogenase family.</text>
</comment>
<organism>
    <name type="scientific">Staphylococcus aureus (strain MSSA476)</name>
    <dbReference type="NCBI Taxonomy" id="282459"/>
    <lineage>
        <taxon>Bacteria</taxon>
        <taxon>Bacillati</taxon>
        <taxon>Bacillota</taxon>
        <taxon>Bacilli</taxon>
        <taxon>Bacillales</taxon>
        <taxon>Staphylococcaceae</taxon>
        <taxon>Staphylococcus</taxon>
    </lineage>
</organism>
<feature type="chain" id="PRO_0000287367" description="Type II NADH:quinone oxidoreductase">
    <location>
        <begin position="1"/>
        <end position="402"/>
    </location>
</feature>
<feature type="active site" evidence="1">
    <location>
        <position position="172"/>
    </location>
</feature>
<feature type="binding site" evidence="1">
    <location>
        <begin position="12"/>
        <end position="16"/>
    </location>
    <ligand>
        <name>FAD</name>
        <dbReference type="ChEBI" id="CHEBI:57692"/>
    </ligand>
</feature>
<feature type="binding site" evidence="1">
    <location>
        <begin position="39"/>
        <end position="40"/>
    </location>
    <ligand>
        <name>FAD</name>
        <dbReference type="ChEBI" id="CHEBI:57692"/>
    </ligand>
</feature>
<feature type="binding site" evidence="1">
    <location>
        <position position="83"/>
    </location>
    <ligand>
        <name>FAD</name>
        <dbReference type="ChEBI" id="CHEBI:57692"/>
    </ligand>
</feature>
<feature type="binding site" evidence="1">
    <location>
        <position position="302"/>
    </location>
    <ligand>
        <name>FAD</name>
        <dbReference type="ChEBI" id="CHEBI:57692"/>
    </ligand>
</feature>
<feature type="binding site" evidence="1">
    <location>
        <begin position="319"/>
        <end position="320"/>
    </location>
    <ligand>
        <name>FAD</name>
        <dbReference type="ChEBI" id="CHEBI:57692"/>
    </ligand>
</feature>
<feature type="binding site" evidence="1">
    <location>
        <position position="379"/>
    </location>
    <ligand>
        <name>FAD</name>
        <dbReference type="ChEBI" id="CHEBI:57692"/>
    </ligand>
</feature>
<evidence type="ECO:0000250" key="1">
    <source>
        <dbReference type="UniProtKB" id="Q2FZV7"/>
    </source>
</evidence>
<evidence type="ECO:0000305" key="2"/>
<proteinExistence type="inferred from homology"/>
<sequence>MAQDRKKVLVLGAGYAGLQTVTKLQKAISTEEAEITLINKNEYHYEATWLHEASAGTLNYEDVLYPVESVLKKDKVNFVQAEVTKIDRDAKKVETNQGIYDFDILVVALGFVSETFGIEGMKDHAFQIENVITARELSRHIEDKFANYAASKEKDDNDLSILVGGAGFTGVEFLGELTDRIPELCSKYGVDQNKVKITCVEAAPKMLPMFSEELVNHAVSYLEDRGVEFKIATPIVACNEKGFVVEVDGEKQQLNAGTSVWAAGVRGSKLMEESFEGVKRGRIVTKQDLTINGYDNIFVIGDCSAFIPAGEERPLPTTAQIAMQQGESVAKNIKRILNGESTEEFEYVDRGTVCSLGSHDGVGMVFDKPIAGKKAAFMKKVIDTRAVFKIGGIGLAFKKGKF</sequence>